<keyword id="KW-1185">Reference proteome</keyword>
<keyword id="KW-0687">Ribonucleoprotein</keyword>
<keyword id="KW-0689">Ribosomal protein</keyword>
<gene>
    <name evidence="1" type="primary">rpmA</name>
    <name type="ordered locus">Cgl2362</name>
    <name type="ordered locus">cg2594</name>
</gene>
<feature type="chain" id="PRO_0000181080" description="Large ribosomal subunit protein bL27">
    <location>
        <begin position="1"/>
        <end position="88"/>
    </location>
</feature>
<feature type="region of interest" description="Disordered" evidence="2">
    <location>
        <begin position="1"/>
        <end position="26"/>
    </location>
</feature>
<organism>
    <name type="scientific">Corynebacterium glutamicum (strain ATCC 13032 / DSM 20300 / JCM 1318 / BCRC 11384 / CCUG 27702 / LMG 3730 / NBRC 12168 / NCIMB 10025 / NRRL B-2784 / 534)</name>
    <dbReference type="NCBI Taxonomy" id="196627"/>
    <lineage>
        <taxon>Bacteria</taxon>
        <taxon>Bacillati</taxon>
        <taxon>Actinomycetota</taxon>
        <taxon>Actinomycetes</taxon>
        <taxon>Mycobacteriales</taxon>
        <taxon>Corynebacteriaceae</taxon>
        <taxon>Corynebacterium</taxon>
    </lineage>
</organism>
<dbReference type="EMBL" id="BA000036">
    <property type="protein sequence ID" value="BAB99755.1"/>
    <property type="molecule type" value="Genomic_DNA"/>
</dbReference>
<dbReference type="EMBL" id="BX927155">
    <property type="protein sequence ID" value="CAF21027.1"/>
    <property type="molecule type" value="Genomic_DNA"/>
</dbReference>
<dbReference type="RefSeq" id="NP_601563.1">
    <property type="nucleotide sequence ID" value="NC_003450.3"/>
</dbReference>
<dbReference type="RefSeq" id="WP_003859304.1">
    <property type="nucleotide sequence ID" value="NC_006958.1"/>
</dbReference>
<dbReference type="SMR" id="Q8NN51"/>
<dbReference type="STRING" id="196627.cg2594"/>
<dbReference type="GeneID" id="1020312"/>
<dbReference type="KEGG" id="cgb:cg2594"/>
<dbReference type="KEGG" id="cgl:Cgl2362"/>
<dbReference type="PATRIC" id="fig|196627.13.peg.2297"/>
<dbReference type="eggNOG" id="COG0211">
    <property type="taxonomic scope" value="Bacteria"/>
</dbReference>
<dbReference type="HOGENOM" id="CLU_095424_4_0_11"/>
<dbReference type="OrthoDB" id="9803474at2"/>
<dbReference type="BioCyc" id="CORYNE:G18NG-11959-MONOMER"/>
<dbReference type="Proteomes" id="UP000000582">
    <property type="component" value="Chromosome"/>
</dbReference>
<dbReference type="Proteomes" id="UP000001009">
    <property type="component" value="Chromosome"/>
</dbReference>
<dbReference type="GO" id="GO:0022625">
    <property type="term" value="C:cytosolic large ribosomal subunit"/>
    <property type="evidence" value="ECO:0007669"/>
    <property type="project" value="TreeGrafter"/>
</dbReference>
<dbReference type="GO" id="GO:0003735">
    <property type="term" value="F:structural constituent of ribosome"/>
    <property type="evidence" value="ECO:0007669"/>
    <property type="project" value="InterPro"/>
</dbReference>
<dbReference type="GO" id="GO:0006412">
    <property type="term" value="P:translation"/>
    <property type="evidence" value="ECO:0007669"/>
    <property type="project" value="UniProtKB-UniRule"/>
</dbReference>
<dbReference type="FunFam" id="2.40.50.100:FF:000020">
    <property type="entry name" value="50S ribosomal protein L27"/>
    <property type="match status" value="1"/>
</dbReference>
<dbReference type="Gene3D" id="2.40.50.100">
    <property type="match status" value="1"/>
</dbReference>
<dbReference type="HAMAP" id="MF_00539">
    <property type="entry name" value="Ribosomal_bL27"/>
    <property type="match status" value="1"/>
</dbReference>
<dbReference type="InterPro" id="IPR001684">
    <property type="entry name" value="Ribosomal_bL27"/>
</dbReference>
<dbReference type="InterPro" id="IPR018261">
    <property type="entry name" value="Ribosomal_bL27_CS"/>
</dbReference>
<dbReference type="NCBIfam" id="TIGR00062">
    <property type="entry name" value="L27"/>
    <property type="match status" value="1"/>
</dbReference>
<dbReference type="PANTHER" id="PTHR15893:SF0">
    <property type="entry name" value="LARGE RIBOSOMAL SUBUNIT PROTEIN BL27M"/>
    <property type="match status" value="1"/>
</dbReference>
<dbReference type="PANTHER" id="PTHR15893">
    <property type="entry name" value="RIBOSOMAL PROTEIN L27"/>
    <property type="match status" value="1"/>
</dbReference>
<dbReference type="Pfam" id="PF01016">
    <property type="entry name" value="Ribosomal_L27"/>
    <property type="match status" value="1"/>
</dbReference>
<dbReference type="PRINTS" id="PR00063">
    <property type="entry name" value="RIBOSOMALL27"/>
</dbReference>
<dbReference type="SUPFAM" id="SSF110324">
    <property type="entry name" value="Ribosomal L27 protein-like"/>
    <property type="match status" value="1"/>
</dbReference>
<dbReference type="PROSITE" id="PS00831">
    <property type="entry name" value="RIBOSOMAL_L27"/>
    <property type="match status" value="1"/>
</dbReference>
<proteinExistence type="inferred from homology"/>
<comment type="similarity">
    <text evidence="1">Belongs to the bacterial ribosomal protein bL27 family.</text>
</comment>
<reference key="1">
    <citation type="journal article" date="2003" name="Appl. Microbiol. Biotechnol.">
        <title>The Corynebacterium glutamicum genome: features and impacts on biotechnological processes.</title>
        <authorList>
            <person name="Ikeda M."/>
            <person name="Nakagawa S."/>
        </authorList>
    </citation>
    <scope>NUCLEOTIDE SEQUENCE [LARGE SCALE GENOMIC DNA]</scope>
    <source>
        <strain>ATCC 13032 / DSM 20300 / JCM 1318 / BCRC 11384 / CCUG 27702 / LMG 3730 / NBRC 12168 / NCIMB 10025 / NRRL B-2784 / 534</strain>
    </source>
</reference>
<reference key="2">
    <citation type="journal article" date="2003" name="J. Biotechnol.">
        <title>The complete Corynebacterium glutamicum ATCC 13032 genome sequence and its impact on the production of L-aspartate-derived amino acids and vitamins.</title>
        <authorList>
            <person name="Kalinowski J."/>
            <person name="Bathe B."/>
            <person name="Bartels D."/>
            <person name="Bischoff N."/>
            <person name="Bott M."/>
            <person name="Burkovski A."/>
            <person name="Dusch N."/>
            <person name="Eggeling L."/>
            <person name="Eikmanns B.J."/>
            <person name="Gaigalat L."/>
            <person name="Goesmann A."/>
            <person name="Hartmann M."/>
            <person name="Huthmacher K."/>
            <person name="Kraemer R."/>
            <person name="Linke B."/>
            <person name="McHardy A.C."/>
            <person name="Meyer F."/>
            <person name="Moeckel B."/>
            <person name="Pfefferle W."/>
            <person name="Puehler A."/>
            <person name="Rey D.A."/>
            <person name="Rueckert C."/>
            <person name="Rupp O."/>
            <person name="Sahm H."/>
            <person name="Wendisch V.F."/>
            <person name="Wiegraebe I."/>
            <person name="Tauch A."/>
        </authorList>
    </citation>
    <scope>NUCLEOTIDE SEQUENCE [LARGE SCALE GENOMIC DNA]</scope>
    <source>
        <strain>ATCC 13032 / DSM 20300 / JCM 1318 / BCRC 11384 / CCUG 27702 / LMG 3730 / NBRC 12168 / NCIMB 10025 / NRRL B-2784 / 534</strain>
    </source>
</reference>
<name>RL27_CORGL</name>
<evidence type="ECO:0000255" key="1">
    <source>
        <dbReference type="HAMAP-Rule" id="MF_00539"/>
    </source>
</evidence>
<evidence type="ECO:0000256" key="2">
    <source>
        <dbReference type="SAM" id="MobiDB-lite"/>
    </source>
</evidence>
<evidence type="ECO:0000305" key="3"/>
<protein>
    <recommendedName>
        <fullName evidence="1">Large ribosomal subunit protein bL27</fullName>
    </recommendedName>
    <alternativeName>
        <fullName evidence="3">50S ribosomal protein L27</fullName>
    </alternativeName>
</protein>
<accession>Q8NN51</accession>
<sequence length="88" mass="9441">MAHKKGASSSSNGRDSEAKRLGVKRFGGQQVSAGEILVRQRGTKFHPGENVGRGGDDTLFALKTGAVQFSTKRNRRLVNIVETEAVDA</sequence>